<accession>P02147</accession>
<organism>
    <name type="scientific">Gorilla gorilla beringei</name>
    <name type="common">Mountain gorilla</name>
    <name type="synonym">Highland gorilla</name>
    <dbReference type="NCBI Taxonomy" id="499232"/>
    <lineage>
        <taxon>Eukaryota</taxon>
        <taxon>Metazoa</taxon>
        <taxon>Chordata</taxon>
        <taxon>Craniata</taxon>
        <taxon>Vertebrata</taxon>
        <taxon>Euteleostomi</taxon>
        <taxon>Mammalia</taxon>
        <taxon>Eutheria</taxon>
        <taxon>Euarchontoglires</taxon>
        <taxon>Primates</taxon>
        <taxon>Haplorrhini</taxon>
        <taxon>Catarrhini</taxon>
        <taxon>Hominidae</taxon>
        <taxon>Gorilla</taxon>
    </lineage>
</organism>
<gene>
    <name type="primary">MB</name>
</gene>
<dbReference type="EC" id="1.7.-.-" evidence="1"/>
<dbReference type="EC" id="1.11.1.-" evidence="1"/>
<dbReference type="PIR" id="A02467">
    <property type="entry name" value="MYGO"/>
</dbReference>
<dbReference type="SMR" id="P02147"/>
<dbReference type="GO" id="GO:0070062">
    <property type="term" value="C:extracellular exosome"/>
    <property type="evidence" value="ECO:0007669"/>
    <property type="project" value="TreeGrafter"/>
</dbReference>
<dbReference type="GO" id="GO:0016528">
    <property type="term" value="C:sarcoplasm"/>
    <property type="evidence" value="ECO:0000250"/>
    <property type="project" value="UniProtKB"/>
</dbReference>
<dbReference type="GO" id="GO:0020037">
    <property type="term" value="F:heme binding"/>
    <property type="evidence" value="ECO:0007669"/>
    <property type="project" value="InterPro"/>
</dbReference>
<dbReference type="GO" id="GO:0046872">
    <property type="term" value="F:metal ion binding"/>
    <property type="evidence" value="ECO:0007669"/>
    <property type="project" value="UniProtKB-KW"/>
</dbReference>
<dbReference type="GO" id="GO:0098809">
    <property type="term" value="F:nitrite reductase activity"/>
    <property type="evidence" value="ECO:0000250"/>
    <property type="project" value="UniProtKB"/>
</dbReference>
<dbReference type="GO" id="GO:0019825">
    <property type="term" value="F:oxygen binding"/>
    <property type="evidence" value="ECO:0007669"/>
    <property type="project" value="InterPro"/>
</dbReference>
<dbReference type="GO" id="GO:0005344">
    <property type="term" value="F:oxygen carrier activity"/>
    <property type="evidence" value="ECO:0000250"/>
    <property type="project" value="UniProtKB"/>
</dbReference>
<dbReference type="GO" id="GO:0004601">
    <property type="term" value="F:peroxidase activity"/>
    <property type="evidence" value="ECO:0000250"/>
    <property type="project" value="UniProtKB"/>
</dbReference>
<dbReference type="GO" id="GO:0019430">
    <property type="term" value="P:removal of superoxide radicals"/>
    <property type="evidence" value="ECO:0000250"/>
    <property type="project" value="UniProtKB"/>
</dbReference>
<dbReference type="CDD" id="cd08926">
    <property type="entry name" value="Mb"/>
    <property type="match status" value="1"/>
</dbReference>
<dbReference type="Gene3D" id="6.10.140.2100">
    <property type="match status" value="1"/>
</dbReference>
<dbReference type="Gene3D" id="6.10.140.2110">
    <property type="match status" value="1"/>
</dbReference>
<dbReference type="InterPro" id="IPR000971">
    <property type="entry name" value="Globin"/>
</dbReference>
<dbReference type="InterPro" id="IPR009050">
    <property type="entry name" value="Globin-like_sf"/>
</dbReference>
<dbReference type="InterPro" id="IPR002335">
    <property type="entry name" value="Myoglobin"/>
</dbReference>
<dbReference type="PANTHER" id="PTHR47132">
    <property type="entry name" value="MYOGLOBIN"/>
    <property type="match status" value="1"/>
</dbReference>
<dbReference type="PANTHER" id="PTHR47132:SF1">
    <property type="entry name" value="MYOGLOBIN"/>
    <property type="match status" value="1"/>
</dbReference>
<dbReference type="Pfam" id="PF00042">
    <property type="entry name" value="Globin"/>
    <property type="match status" value="1"/>
</dbReference>
<dbReference type="PRINTS" id="PR00613">
    <property type="entry name" value="MYOGLOBIN"/>
</dbReference>
<dbReference type="SUPFAM" id="SSF46458">
    <property type="entry name" value="Globin-like"/>
    <property type="match status" value="1"/>
</dbReference>
<dbReference type="PROSITE" id="PS01033">
    <property type="entry name" value="GLOBIN"/>
    <property type="match status" value="1"/>
</dbReference>
<protein>
    <recommendedName>
        <fullName>Myoglobin</fullName>
    </recommendedName>
    <alternativeName>
        <fullName evidence="1">Nitrite reductase MB</fullName>
        <ecNumber evidence="1">1.7.-.-</ecNumber>
    </alternativeName>
    <alternativeName>
        <fullName evidence="1">Pseudoperoxidase MB</fullName>
        <ecNumber evidence="1">1.11.1.-</ecNumber>
    </alternativeName>
</protein>
<sequence>MGLSDGEWQLVLNVWGKVEADISGHGQEVLIRLFKGHPETLEKFDKFKHLKSEDEMKASEDLKKHGATVLTALGGILKKKGHHEAEIKPLAQSHATKHKIPVKYLEFISECIIQVLQSKHPGDFGADAQGAMNKALELFRKDMASNYKELGFQG</sequence>
<keyword id="KW-0963">Cytoplasm</keyword>
<keyword id="KW-0903">Direct protein sequencing</keyword>
<keyword id="KW-0349">Heme</keyword>
<keyword id="KW-0408">Iron</keyword>
<keyword id="KW-0479">Metal-binding</keyword>
<keyword id="KW-0514">Muscle protein</keyword>
<keyword id="KW-0560">Oxidoreductase</keyword>
<keyword id="KW-0561">Oxygen transport</keyword>
<keyword id="KW-0597">Phosphoprotein</keyword>
<keyword id="KW-0813">Transport</keyword>
<evidence type="ECO:0000250" key="1">
    <source>
        <dbReference type="UniProtKB" id="P02144"/>
    </source>
</evidence>
<evidence type="ECO:0000250" key="2">
    <source>
        <dbReference type="UniProtKB" id="P02185"/>
    </source>
</evidence>
<evidence type="ECO:0000250" key="3">
    <source>
        <dbReference type="UniProtKB" id="P02189"/>
    </source>
</evidence>
<evidence type="ECO:0000250" key="4">
    <source>
        <dbReference type="UniProtKB" id="P04247"/>
    </source>
</evidence>
<evidence type="ECO:0000250" key="5">
    <source>
        <dbReference type="UniProtKB" id="P68082"/>
    </source>
</evidence>
<evidence type="ECO:0000250" key="6">
    <source>
        <dbReference type="UniProtKB" id="Q9QZ76"/>
    </source>
</evidence>
<evidence type="ECO:0000255" key="7">
    <source>
        <dbReference type="PROSITE-ProRule" id="PRU00238"/>
    </source>
</evidence>
<evidence type="ECO:0000269" key="8">
    <source>
    </source>
</evidence>
<comment type="function">
    <text evidence="1">Monomeric heme protein which primary function is to store oxygen and facilitate its diffusion within muscle tissues. Reversibly binds oxygen through a pentacoordinated heme iron and enables its timely and efficient release as needed during periods of heightened demand. Depending on the oxidative conditions of tissues and cells, and in addition to its ability to bind oxygen, it also has a nitrite reductase activity whereby it regulates the production of bioactive nitric oxide. Under stress conditions, like hypoxia and anoxia, it also protects cells against reactive oxygen species thanks to its pseudoperoxidase activity.</text>
</comment>
<comment type="catalytic activity">
    <reaction evidence="1">
        <text>Fe(III)-heme b-[protein] + nitric oxide + H2O = Fe(II)-heme b-[protein] + nitrite + 2 H(+)</text>
        <dbReference type="Rhea" id="RHEA:77711"/>
        <dbReference type="Rhea" id="RHEA-COMP:18975"/>
        <dbReference type="Rhea" id="RHEA-COMP:18976"/>
        <dbReference type="ChEBI" id="CHEBI:15377"/>
        <dbReference type="ChEBI" id="CHEBI:15378"/>
        <dbReference type="ChEBI" id="CHEBI:16301"/>
        <dbReference type="ChEBI" id="CHEBI:16480"/>
        <dbReference type="ChEBI" id="CHEBI:55376"/>
        <dbReference type="ChEBI" id="CHEBI:60344"/>
    </reaction>
    <physiologicalReaction direction="right-to-left" evidence="1">
        <dbReference type="Rhea" id="RHEA:77713"/>
    </physiologicalReaction>
</comment>
<comment type="catalytic activity">
    <reaction evidence="1">
        <text>H2O2 + AH2 = A + 2 H2O</text>
        <dbReference type="Rhea" id="RHEA:30275"/>
        <dbReference type="ChEBI" id="CHEBI:13193"/>
        <dbReference type="ChEBI" id="CHEBI:15377"/>
        <dbReference type="ChEBI" id="CHEBI:16240"/>
        <dbReference type="ChEBI" id="CHEBI:17499"/>
    </reaction>
</comment>
<comment type="subunit">
    <text evidence="2">Monomeric.</text>
</comment>
<comment type="subcellular location">
    <subcellularLocation>
        <location evidence="1">Cytoplasm</location>
        <location evidence="1">Sarcoplasm</location>
    </subcellularLocation>
</comment>
<comment type="similarity">
    <text evidence="7">Belongs to the globin family.</text>
</comment>
<reference key="1">
    <citation type="journal article" date="1975" name="Biochim. Biophys. Acta">
        <title>The myoglobin of primates. VIII. Gorilla gorilla beringei (eastern highland gorilla).</title>
        <authorList>
            <person name="Romero-Herrera A.E."/>
            <person name="Lehmann H."/>
            <person name="Fossey D."/>
        </authorList>
    </citation>
    <scope>PROTEIN SEQUENCE OF 2-154</scope>
    <source>
        <tissue>Skeletal muscle</tissue>
    </source>
</reference>
<proteinExistence type="evidence at protein level"/>
<feature type="initiator methionine" description="Removed" evidence="8">
    <location>
        <position position="1"/>
    </location>
</feature>
<feature type="chain" id="PRO_0000053299" description="Myoglobin">
    <location>
        <begin position="2"/>
        <end position="154"/>
    </location>
</feature>
<feature type="domain" description="Globin" evidence="7">
    <location>
        <begin position="2"/>
        <end position="148"/>
    </location>
</feature>
<feature type="binding site" evidence="5">
    <location>
        <position position="65"/>
    </location>
    <ligand>
        <name>nitrite</name>
        <dbReference type="ChEBI" id="CHEBI:16301"/>
    </ligand>
</feature>
<feature type="binding site" evidence="3 7">
    <location>
        <position position="65"/>
    </location>
    <ligand>
        <name>O2</name>
        <dbReference type="ChEBI" id="CHEBI:15379"/>
    </ligand>
</feature>
<feature type="binding site" description="proximal binding residue" evidence="1">
    <location>
        <position position="94"/>
    </location>
    <ligand>
        <name>heme b</name>
        <dbReference type="ChEBI" id="CHEBI:60344"/>
    </ligand>
    <ligandPart>
        <name>Fe</name>
        <dbReference type="ChEBI" id="CHEBI:18248"/>
    </ligandPart>
</feature>
<feature type="modified residue" description="Phosphoserine" evidence="6">
    <location>
        <position position="4"/>
    </location>
</feature>
<feature type="modified residue" description="Phosphothreonine" evidence="4">
    <location>
        <position position="68"/>
    </location>
</feature>
<name>MYG_GORBE</name>